<comment type="function">
    <text evidence="1">Poorly processive, error-prone DNA polymerase involved in untargeted mutagenesis. Copies undamaged DNA at stalled replication forks, which arise in vivo from mismatched or misaligned primer ends. These misaligned primers can be extended by PolIV. Exhibits no 3'-5' exonuclease (proofreading) activity. May be involved in translesional synthesis, in conjunction with the beta clamp from PolIII.</text>
</comment>
<comment type="catalytic activity">
    <reaction evidence="1">
        <text>DNA(n) + a 2'-deoxyribonucleoside 5'-triphosphate = DNA(n+1) + diphosphate</text>
        <dbReference type="Rhea" id="RHEA:22508"/>
        <dbReference type="Rhea" id="RHEA-COMP:17339"/>
        <dbReference type="Rhea" id="RHEA-COMP:17340"/>
        <dbReference type="ChEBI" id="CHEBI:33019"/>
        <dbReference type="ChEBI" id="CHEBI:61560"/>
        <dbReference type="ChEBI" id="CHEBI:173112"/>
        <dbReference type="EC" id="2.7.7.7"/>
    </reaction>
</comment>
<comment type="cofactor">
    <cofactor evidence="1">
        <name>Mg(2+)</name>
        <dbReference type="ChEBI" id="CHEBI:18420"/>
    </cofactor>
    <text evidence="1">Binds 2 magnesium ions per subunit.</text>
</comment>
<comment type="subunit">
    <text evidence="1">Monomer.</text>
</comment>
<comment type="subcellular location">
    <subcellularLocation>
        <location evidence="1">Cytoplasm</location>
    </subcellularLocation>
</comment>
<comment type="similarity">
    <text evidence="1">Belongs to the DNA polymerase type-Y family.</text>
</comment>
<keyword id="KW-0963">Cytoplasm</keyword>
<keyword id="KW-0227">DNA damage</keyword>
<keyword id="KW-0234">DNA repair</keyword>
<keyword id="KW-0235">DNA replication</keyword>
<keyword id="KW-0238">DNA-binding</keyword>
<keyword id="KW-0239">DNA-directed DNA polymerase</keyword>
<keyword id="KW-0460">Magnesium</keyword>
<keyword id="KW-0479">Metal-binding</keyword>
<keyword id="KW-0515">Mutator protein</keyword>
<keyword id="KW-0548">Nucleotidyltransferase</keyword>
<keyword id="KW-1185">Reference proteome</keyword>
<keyword id="KW-0808">Transferase</keyword>
<proteinExistence type="inferred from homology"/>
<gene>
    <name evidence="1" type="primary">dinB</name>
    <name type="ordered locus">SDY_0483</name>
</gene>
<name>DPO4_SHIDS</name>
<organism>
    <name type="scientific">Shigella dysenteriae serotype 1 (strain Sd197)</name>
    <dbReference type="NCBI Taxonomy" id="300267"/>
    <lineage>
        <taxon>Bacteria</taxon>
        <taxon>Pseudomonadati</taxon>
        <taxon>Pseudomonadota</taxon>
        <taxon>Gammaproteobacteria</taxon>
        <taxon>Enterobacterales</taxon>
        <taxon>Enterobacteriaceae</taxon>
        <taxon>Shigella</taxon>
    </lineage>
</organism>
<reference key="1">
    <citation type="journal article" date="2005" name="Nucleic Acids Res.">
        <title>Genome dynamics and diversity of Shigella species, the etiologic agents of bacillary dysentery.</title>
        <authorList>
            <person name="Yang F."/>
            <person name="Yang J."/>
            <person name="Zhang X."/>
            <person name="Chen L."/>
            <person name="Jiang Y."/>
            <person name="Yan Y."/>
            <person name="Tang X."/>
            <person name="Wang J."/>
            <person name="Xiong Z."/>
            <person name="Dong J."/>
            <person name="Xue Y."/>
            <person name="Zhu Y."/>
            <person name="Xu X."/>
            <person name="Sun L."/>
            <person name="Chen S."/>
            <person name="Nie H."/>
            <person name="Peng J."/>
            <person name="Xu J."/>
            <person name="Wang Y."/>
            <person name="Yuan Z."/>
            <person name="Wen Y."/>
            <person name="Yao Z."/>
            <person name="Shen Y."/>
            <person name="Qiang B."/>
            <person name="Hou Y."/>
            <person name="Yu J."/>
            <person name="Jin Q."/>
        </authorList>
    </citation>
    <scope>NUCLEOTIDE SEQUENCE [LARGE SCALE GENOMIC DNA]</scope>
    <source>
        <strain>Sd197</strain>
    </source>
</reference>
<evidence type="ECO:0000255" key="1">
    <source>
        <dbReference type="HAMAP-Rule" id="MF_01113"/>
    </source>
</evidence>
<dbReference type="EC" id="2.7.7.7" evidence="1"/>
<dbReference type="EMBL" id="CP000034">
    <property type="protein sequence ID" value="ABB60690.1"/>
    <property type="molecule type" value="Genomic_DNA"/>
</dbReference>
<dbReference type="RefSeq" id="WP_001226160.1">
    <property type="nucleotide sequence ID" value="NC_007606.1"/>
</dbReference>
<dbReference type="RefSeq" id="YP_402179.1">
    <property type="nucleotide sequence ID" value="NC_007606.1"/>
</dbReference>
<dbReference type="SMR" id="Q32J17"/>
<dbReference type="STRING" id="300267.SDY_0483"/>
<dbReference type="EnsemblBacteria" id="ABB60690">
    <property type="protein sequence ID" value="ABB60690"/>
    <property type="gene ID" value="SDY_0483"/>
</dbReference>
<dbReference type="KEGG" id="sdy:SDY_0483"/>
<dbReference type="PATRIC" id="fig|300267.13.peg.570"/>
<dbReference type="HOGENOM" id="CLU_012348_1_2_6"/>
<dbReference type="Proteomes" id="UP000002716">
    <property type="component" value="Chromosome"/>
</dbReference>
<dbReference type="GO" id="GO:0005829">
    <property type="term" value="C:cytosol"/>
    <property type="evidence" value="ECO:0007669"/>
    <property type="project" value="TreeGrafter"/>
</dbReference>
<dbReference type="GO" id="GO:0003684">
    <property type="term" value="F:damaged DNA binding"/>
    <property type="evidence" value="ECO:0007669"/>
    <property type="project" value="InterPro"/>
</dbReference>
<dbReference type="GO" id="GO:0003887">
    <property type="term" value="F:DNA-directed DNA polymerase activity"/>
    <property type="evidence" value="ECO:0007669"/>
    <property type="project" value="UniProtKB-UniRule"/>
</dbReference>
<dbReference type="GO" id="GO:0000287">
    <property type="term" value="F:magnesium ion binding"/>
    <property type="evidence" value="ECO:0007669"/>
    <property type="project" value="UniProtKB-UniRule"/>
</dbReference>
<dbReference type="GO" id="GO:0006261">
    <property type="term" value="P:DNA-templated DNA replication"/>
    <property type="evidence" value="ECO:0007669"/>
    <property type="project" value="UniProtKB-UniRule"/>
</dbReference>
<dbReference type="GO" id="GO:0042276">
    <property type="term" value="P:error-prone translesion synthesis"/>
    <property type="evidence" value="ECO:0007669"/>
    <property type="project" value="TreeGrafter"/>
</dbReference>
<dbReference type="GO" id="GO:0009432">
    <property type="term" value="P:SOS response"/>
    <property type="evidence" value="ECO:0007669"/>
    <property type="project" value="TreeGrafter"/>
</dbReference>
<dbReference type="CDD" id="cd03586">
    <property type="entry name" value="PolY_Pol_IV_kappa"/>
    <property type="match status" value="1"/>
</dbReference>
<dbReference type="FunFam" id="1.10.150.20:FF:000019">
    <property type="entry name" value="DNA polymerase IV"/>
    <property type="match status" value="1"/>
</dbReference>
<dbReference type="FunFam" id="3.30.1490.100:FF:000002">
    <property type="entry name" value="DNA polymerase IV"/>
    <property type="match status" value="1"/>
</dbReference>
<dbReference type="FunFam" id="3.30.70.270:FF:000002">
    <property type="entry name" value="DNA polymerase IV"/>
    <property type="match status" value="1"/>
</dbReference>
<dbReference type="FunFam" id="3.40.1170.60:FF:000001">
    <property type="entry name" value="DNA polymerase IV"/>
    <property type="match status" value="1"/>
</dbReference>
<dbReference type="Gene3D" id="3.30.70.270">
    <property type="match status" value="1"/>
</dbReference>
<dbReference type="Gene3D" id="3.40.1170.60">
    <property type="match status" value="1"/>
</dbReference>
<dbReference type="Gene3D" id="1.10.150.20">
    <property type="entry name" value="5' to 3' exonuclease, C-terminal subdomain"/>
    <property type="match status" value="1"/>
</dbReference>
<dbReference type="Gene3D" id="3.30.1490.100">
    <property type="entry name" value="DNA polymerase, Y-family, little finger domain"/>
    <property type="match status" value="1"/>
</dbReference>
<dbReference type="HAMAP" id="MF_01113">
    <property type="entry name" value="DNApol_IV"/>
    <property type="match status" value="1"/>
</dbReference>
<dbReference type="InterPro" id="IPR043502">
    <property type="entry name" value="DNA/RNA_pol_sf"/>
</dbReference>
<dbReference type="InterPro" id="IPR036775">
    <property type="entry name" value="DNA_pol_Y-fam_lit_finger_sf"/>
</dbReference>
<dbReference type="InterPro" id="IPR017961">
    <property type="entry name" value="DNA_pol_Y-fam_little_finger"/>
</dbReference>
<dbReference type="InterPro" id="IPR050116">
    <property type="entry name" value="DNA_polymerase-Y"/>
</dbReference>
<dbReference type="InterPro" id="IPR022880">
    <property type="entry name" value="DNApol_IV"/>
</dbReference>
<dbReference type="InterPro" id="IPR053848">
    <property type="entry name" value="IMS_HHH_1"/>
</dbReference>
<dbReference type="InterPro" id="IPR043128">
    <property type="entry name" value="Rev_trsase/Diguanyl_cyclase"/>
</dbReference>
<dbReference type="InterPro" id="IPR001126">
    <property type="entry name" value="UmuC"/>
</dbReference>
<dbReference type="NCBIfam" id="NF002677">
    <property type="entry name" value="PRK02406.1"/>
    <property type="match status" value="1"/>
</dbReference>
<dbReference type="PANTHER" id="PTHR11076:SF33">
    <property type="entry name" value="DNA POLYMERASE KAPPA"/>
    <property type="match status" value="1"/>
</dbReference>
<dbReference type="PANTHER" id="PTHR11076">
    <property type="entry name" value="DNA REPAIR POLYMERASE UMUC / TRANSFERASE FAMILY MEMBER"/>
    <property type="match status" value="1"/>
</dbReference>
<dbReference type="Pfam" id="PF00817">
    <property type="entry name" value="IMS"/>
    <property type="match status" value="1"/>
</dbReference>
<dbReference type="Pfam" id="PF11799">
    <property type="entry name" value="IMS_C"/>
    <property type="match status" value="1"/>
</dbReference>
<dbReference type="Pfam" id="PF21999">
    <property type="entry name" value="IMS_HHH_1"/>
    <property type="match status" value="1"/>
</dbReference>
<dbReference type="SUPFAM" id="SSF56672">
    <property type="entry name" value="DNA/RNA polymerases"/>
    <property type="match status" value="1"/>
</dbReference>
<dbReference type="SUPFAM" id="SSF100879">
    <property type="entry name" value="Lesion bypass DNA polymerase (Y-family), little finger domain"/>
    <property type="match status" value="1"/>
</dbReference>
<dbReference type="PROSITE" id="PS50173">
    <property type="entry name" value="UMUC"/>
    <property type="match status" value="1"/>
</dbReference>
<feature type="chain" id="PRO_1000084940" description="DNA polymerase IV">
    <location>
        <begin position="1"/>
        <end position="351"/>
    </location>
</feature>
<feature type="domain" description="UmuC" evidence="1">
    <location>
        <begin position="4"/>
        <end position="185"/>
    </location>
</feature>
<feature type="active site" evidence="1">
    <location>
        <position position="104"/>
    </location>
</feature>
<feature type="binding site" evidence="1">
    <location>
        <position position="8"/>
    </location>
    <ligand>
        <name>Mg(2+)</name>
        <dbReference type="ChEBI" id="CHEBI:18420"/>
    </ligand>
</feature>
<feature type="binding site" evidence="1">
    <location>
        <position position="103"/>
    </location>
    <ligand>
        <name>Mg(2+)</name>
        <dbReference type="ChEBI" id="CHEBI:18420"/>
    </ligand>
</feature>
<feature type="site" description="Substrate discrimination" evidence="1">
    <location>
        <position position="13"/>
    </location>
</feature>
<protein>
    <recommendedName>
        <fullName evidence="1">DNA polymerase IV</fullName>
        <shortName evidence="1">Pol IV</shortName>
        <ecNumber evidence="1">2.7.7.7</ecNumber>
    </recommendedName>
</protein>
<accession>Q32J17</accession>
<sequence length="351" mass="39480">MRKIIHVDMDCFFAAVEMRDNPALRDIPIAIGGSRERRGVISTANYPARKFGVRSAMPTGMALKLCPHLTLLPGRFDAYKEASNHIREIFSRYTSRIEPLSLDEAYLDVTDSVHCHGSATLIAQEIRQTIFNELQLTASAGVAPVKFLAKIASDMNKPNGQFVITPAEVPAFLQTLPLAKIPGVGKVSAAKLEAIGLRTCGDVQKCDLVILLKRFGKFGRILWERSQGIDERDVNSERLRKSVGVERTMAEDIHHWSECEAIIERLYPELERRLAKVKPDLLIARQGVKLKFDDFQQTTQEHVWPRLNKADLIATARKTWDERRGGRGVRLVGLHVTLLDPQMERQLVLGL</sequence>